<gene>
    <name evidence="1" type="primary">alaS</name>
    <name type="ordered locus">XfasM23_0087</name>
</gene>
<organism>
    <name type="scientific">Xylella fastidiosa (strain M23)</name>
    <dbReference type="NCBI Taxonomy" id="405441"/>
    <lineage>
        <taxon>Bacteria</taxon>
        <taxon>Pseudomonadati</taxon>
        <taxon>Pseudomonadota</taxon>
        <taxon>Gammaproteobacteria</taxon>
        <taxon>Lysobacterales</taxon>
        <taxon>Lysobacteraceae</taxon>
        <taxon>Xylella</taxon>
    </lineage>
</organism>
<evidence type="ECO:0000255" key="1">
    <source>
        <dbReference type="HAMAP-Rule" id="MF_00036"/>
    </source>
</evidence>
<sequence length="884" mass="96214">MNIPTKFTTSKIRSDFLEFFKNKGHKIVPSAPLVPSNDPTLLFTNSGMVQFKDVFLGAEKRSEVRVADVQCCLRAGGKHNDLDSVGYTARHHTFFEMLGNWSFGDYFKKEAIMWAWELLTQVWELPPERLLVTVYHTDDESYALWRDMVGVPEDRIVRIGDNKGAPFASDNFWQMADTGPCGPCTEIFYDHGEHIPGGPPGSPGEDGDRFIEIWNLVFMQFDRQSDGTLVPLPTPCVDTGMGLERLAAILQHVHTNYEIDLFQTLILKAAELTAVADVQNKSLCVIADHSRACAFLIVDGVLPSNEGRGYVLRRIIRRALRHGWMLGVRQPFFNNMVPTLIAVMGDAYPKLQAAAESVMRTLLAEEERFAETLDVGMKIFNEVAAKVANGVIPGSDAFRLYDTYGFPVDLTADIARERGMRVDMAGFEAAMTQQRKTARAAGKFGRGVQLSAERAATLSPTVFLGYEQLQADDLRVVALLSDGGLTDSASVGDEVIVLTDRTPFYAESGGQVGDIGTLMASDGVRLEVTDTQKLMGQFHGHVARIVQGGVKVGDVLSGSVAVARRKMVALNHSATHLLHCALRSVFGTHVVQKGSLVAPDRLRFDFSHFEPISAAQMTLIERMVNDEVRANHLVMIEQMGMQAALDAGAMALFGEKYGEHVRVVTMGTSVELCGGTHITRTGDIGLFKIISECGVSSGVRRIEAVTGESALNHVLAEEHRLYEVAGLIGSNANNVVNHIRQLTDRQKTLERELEKLKGKLISGTITDLLSMAVNVADVKVVAARLDGLDGKALREALDRLKLQLSDAVIVLAGVTGGKVALVTAVNGPRAMGKVKADTLLSHVATQINGRGGGRVDFAQGGGEDGPSLRSALDGVATWVKQHLN</sequence>
<feature type="chain" id="PRO_0000347868" description="Alanine--tRNA ligase">
    <location>
        <begin position="1"/>
        <end position="884"/>
    </location>
</feature>
<feature type="binding site" evidence="1">
    <location>
        <position position="572"/>
    </location>
    <ligand>
        <name>Zn(2+)</name>
        <dbReference type="ChEBI" id="CHEBI:29105"/>
    </ligand>
</feature>
<feature type="binding site" evidence="1">
    <location>
        <position position="576"/>
    </location>
    <ligand>
        <name>Zn(2+)</name>
        <dbReference type="ChEBI" id="CHEBI:29105"/>
    </ligand>
</feature>
<feature type="binding site" evidence="1">
    <location>
        <position position="673"/>
    </location>
    <ligand>
        <name>Zn(2+)</name>
        <dbReference type="ChEBI" id="CHEBI:29105"/>
    </ligand>
</feature>
<feature type="binding site" evidence="1">
    <location>
        <position position="677"/>
    </location>
    <ligand>
        <name>Zn(2+)</name>
        <dbReference type="ChEBI" id="CHEBI:29105"/>
    </ligand>
</feature>
<accession>B2I6K2</accession>
<proteinExistence type="inferred from homology"/>
<reference key="1">
    <citation type="journal article" date="2010" name="J. Bacteriol.">
        <title>Whole genome sequences of two Xylella fastidiosa strains (M12 and M23) causing almond leaf scorch disease in California.</title>
        <authorList>
            <person name="Chen J."/>
            <person name="Xie G."/>
            <person name="Han S."/>
            <person name="Chertkov O."/>
            <person name="Sims D."/>
            <person name="Civerolo E.L."/>
        </authorList>
    </citation>
    <scope>NUCLEOTIDE SEQUENCE [LARGE SCALE GENOMIC DNA]</scope>
    <source>
        <strain>M23</strain>
    </source>
</reference>
<keyword id="KW-0030">Aminoacyl-tRNA synthetase</keyword>
<keyword id="KW-0067">ATP-binding</keyword>
<keyword id="KW-0963">Cytoplasm</keyword>
<keyword id="KW-0436">Ligase</keyword>
<keyword id="KW-0479">Metal-binding</keyword>
<keyword id="KW-0547">Nucleotide-binding</keyword>
<keyword id="KW-0648">Protein biosynthesis</keyword>
<keyword id="KW-0694">RNA-binding</keyword>
<keyword id="KW-0820">tRNA-binding</keyword>
<keyword id="KW-0862">Zinc</keyword>
<comment type="function">
    <text evidence="1">Catalyzes the attachment of alanine to tRNA(Ala) in a two-step reaction: alanine is first activated by ATP to form Ala-AMP and then transferred to the acceptor end of tRNA(Ala). Also edits incorrectly charged Ser-tRNA(Ala) and Gly-tRNA(Ala) via its editing domain.</text>
</comment>
<comment type="catalytic activity">
    <reaction evidence="1">
        <text>tRNA(Ala) + L-alanine + ATP = L-alanyl-tRNA(Ala) + AMP + diphosphate</text>
        <dbReference type="Rhea" id="RHEA:12540"/>
        <dbReference type="Rhea" id="RHEA-COMP:9657"/>
        <dbReference type="Rhea" id="RHEA-COMP:9923"/>
        <dbReference type="ChEBI" id="CHEBI:30616"/>
        <dbReference type="ChEBI" id="CHEBI:33019"/>
        <dbReference type="ChEBI" id="CHEBI:57972"/>
        <dbReference type="ChEBI" id="CHEBI:78442"/>
        <dbReference type="ChEBI" id="CHEBI:78497"/>
        <dbReference type="ChEBI" id="CHEBI:456215"/>
        <dbReference type="EC" id="6.1.1.7"/>
    </reaction>
</comment>
<comment type="cofactor">
    <cofactor evidence="1">
        <name>Zn(2+)</name>
        <dbReference type="ChEBI" id="CHEBI:29105"/>
    </cofactor>
    <text evidence="1">Binds 1 zinc ion per subunit.</text>
</comment>
<comment type="subcellular location">
    <subcellularLocation>
        <location evidence="1">Cytoplasm</location>
    </subcellularLocation>
</comment>
<comment type="domain">
    <text evidence="1">Consists of three domains; the N-terminal catalytic domain, the editing domain and the C-terminal C-Ala domain. The editing domain removes incorrectly charged amino acids, while the C-Ala domain, along with tRNA(Ala), serves as a bridge to cooperatively bring together the editing and aminoacylation centers thus stimulating deacylation of misacylated tRNAs.</text>
</comment>
<comment type="similarity">
    <text evidence="1">Belongs to the class-II aminoacyl-tRNA synthetase family.</text>
</comment>
<protein>
    <recommendedName>
        <fullName evidence="1">Alanine--tRNA ligase</fullName>
        <ecNumber evidence="1">6.1.1.7</ecNumber>
    </recommendedName>
    <alternativeName>
        <fullName evidence="1">Alanyl-tRNA synthetase</fullName>
        <shortName evidence="1">AlaRS</shortName>
    </alternativeName>
</protein>
<name>SYA_XYLF2</name>
<dbReference type="EC" id="6.1.1.7" evidence="1"/>
<dbReference type="EMBL" id="CP001011">
    <property type="protein sequence ID" value="ACB91544.1"/>
    <property type="molecule type" value="Genomic_DNA"/>
</dbReference>
<dbReference type="RefSeq" id="WP_004087615.1">
    <property type="nucleotide sequence ID" value="NC_010577.1"/>
</dbReference>
<dbReference type="SMR" id="B2I6K2"/>
<dbReference type="GeneID" id="93903785"/>
<dbReference type="KEGG" id="xfn:XfasM23_0087"/>
<dbReference type="HOGENOM" id="CLU_004485_1_1_6"/>
<dbReference type="Proteomes" id="UP000001698">
    <property type="component" value="Chromosome"/>
</dbReference>
<dbReference type="GO" id="GO:0005829">
    <property type="term" value="C:cytosol"/>
    <property type="evidence" value="ECO:0007669"/>
    <property type="project" value="TreeGrafter"/>
</dbReference>
<dbReference type="GO" id="GO:0004813">
    <property type="term" value="F:alanine-tRNA ligase activity"/>
    <property type="evidence" value="ECO:0007669"/>
    <property type="project" value="UniProtKB-UniRule"/>
</dbReference>
<dbReference type="GO" id="GO:0002161">
    <property type="term" value="F:aminoacyl-tRNA deacylase activity"/>
    <property type="evidence" value="ECO:0007669"/>
    <property type="project" value="TreeGrafter"/>
</dbReference>
<dbReference type="GO" id="GO:0005524">
    <property type="term" value="F:ATP binding"/>
    <property type="evidence" value="ECO:0007669"/>
    <property type="project" value="UniProtKB-UniRule"/>
</dbReference>
<dbReference type="GO" id="GO:0000049">
    <property type="term" value="F:tRNA binding"/>
    <property type="evidence" value="ECO:0007669"/>
    <property type="project" value="UniProtKB-KW"/>
</dbReference>
<dbReference type="GO" id="GO:0008270">
    <property type="term" value="F:zinc ion binding"/>
    <property type="evidence" value="ECO:0007669"/>
    <property type="project" value="UniProtKB-UniRule"/>
</dbReference>
<dbReference type="GO" id="GO:0006419">
    <property type="term" value="P:alanyl-tRNA aminoacylation"/>
    <property type="evidence" value="ECO:0007669"/>
    <property type="project" value="UniProtKB-UniRule"/>
</dbReference>
<dbReference type="GO" id="GO:0045892">
    <property type="term" value="P:negative regulation of DNA-templated transcription"/>
    <property type="evidence" value="ECO:0007669"/>
    <property type="project" value="TreeGrafter"/>
</dbReference>
<dbReference type="CDD" id="cd00673">
    <property type="entry name" value="AlaRS_core"/>
    <property type="match status" value="1"/>
</dbReference>
<dbReference type="FunFam" id="3.10.310.40:FF:000001">
    <property type="entry name" value="Alanine--tRNA ligase"/>
    <property type="match status" value="1"/>
</dbReference>
<dbReference type="FunFam" id="3.30.54.20:FF:000001">
    <property type="entry name" value="Alanine--tRNA ligase"/>
    <property type="match status" value="1"/>
</dbReference>
<dbReference type="FunFam" id="3.30.930.10:FF:000004">
    <property type="entry name" value="Alanine--tRNA ligase"/>
    <property type="match status" value="1"/>
</dbReference>
<dbReference type="FunFam" id="3.30.980.10:FF:000004">
    <property type="entry name" value="Alanine--tRNA ligase, cytoplasmic"/>
    <property type="match status" value="1"/>
</dbReference>
<dbReference type="Gene3D" id="2.40.30.130">
    <property type="match status" value="1"/>
</dbReference>
<dbReference type="Gene3D" id="3.10.310.40">
    <property type="match status" value="1"/>
</dbReference>
<dbReference type="Gene3D" id="3.30.54.20">
    <property type="match status" value="1"/>
</dbReference>
<dbReference type="Gene3D" id="6.10.250.550">
    <property type="match status" value="1"/>
</dbReference>
<dbReference type="Gene3D" id="3.30.930.10">
    <property type="entry name" value="Bira Bifunctional Protein, Domain 2"/>
    <property type="match status" value="1"/>
</dbReference>
<dbReference type="Gene3D" id="3.30.980.10">
    <property type="entry name" value="Threonyl-trna Synthetase, Chain A, domain 2"/>
    <property type="match status" value="1"/>
</dbReference>
<dbReference type="HAMAP" id="MF_00036_B">
    <property type="entry name" value="Ala_tRNA_synth_B"/>
    <property type="match status" value="1"/>
</dbReference>
<dbReference type="InterPro" id="IPR045864">
    <property type="entry name" value="aa-tRNA-synth_II/BPL/LPL"/>
</dbReference>
<dbReference type="InterPro" id="IPR002318">
    <property type="entry name" value="Ala-tRNA-lgiase_IIc"/>
</dbReference>
<dbReference type="InterPro" id="IPR018162">
    <property type="entry name" value="Ala-tRNA-ligase_IIc_anticod-bd"/>
</dbReference>
<dbReference type="InterPro" id="IPR018165">
    <property type="entry name" value="Ala-tRNA-synth_IIc_core"/>
</dbReference>
<dbReference type="InterPro" id="IPR018164">
    <property type="entry name" value="Ala-tRNA-synth_IIc_N"/>
</dbReference>
<dbReference type="InterPro" id="IPR050058">
    <property type="entry name" value="Ala-tRNA_ligase"/>
</dbReference>
<dbReference type="InterPro" id="IPR023033">
    <property type="entry name" value="Ala_tRNA_ligase_euk/bac"/>
</dbReference>
<dbReference type="InterPro" id="IPR003156">
    <property type="entry name" value="DHHA1_dom"/>
</dbReference>
<dbReference type="InterPro" id="IPR018163">
    <property type="entry name" value="Thr/Ala-tRNA-synth_IIc_edit"/>
</dbReference>
<dbReference type="InterPro" id="IPR009000">
    <property type="entry name" value="Transl_B-barrel_sf"/>
</dbReference>
<dbReference type="InterPro" id="IPR012947">
    <property type="entry name" value="tRNA_SAD"/>
</dbReference>
<dbReference type="NCBIfam" id="TIGR00344">
    <property type="entry name" value="alaS"/>
    <property type="match status" value="1"/>
</dbReference>
<dbReference type="PANTHER" id="PTHR11777:SF9">
    <property type="entry name" value="ALANINE--TRNA LIGASE, CYTOPLASMIC"/>
    <property type="match status" value="1"/>
</dbReference>
<dbReference type="PANTHER" id="PTHR11777">
    <property type="entry name" value="ALANYL-TRNA SYNTHETASE"/>
    <property type="match status" value="1"/>
</dbReference>
<dbReference type="Pfam" id="PF02272">
    <property type="entry name" value="DHHA1"/>
    <property type="match status" value="1"/>
</dbReference>
<dbReference type="Pfam" id="PF01411">
    <property type="entry name" value="tRNA-synt_2c"/>
    <property type="match status" value="1"/>
</dbReference>
<dbReference type="Pfam" id="PF07973">
    <property type="entry name" value="tRNA_SAD"/>
    <property type="match status" value="1"/>
</dbReference>
<dbReference type="PRINTS" id="PR00980">
    <property type="entry name" value="TRNASYNTHALA"/>
</dbReference>
<dbReference type="SMART" id="SM00863">
    <property type="entry name" value="tRNA_SAD"/>
    <property type="match status" value="1"/>
</dbReference>
<dbReference type="SUPFAM" id="SSF55681">
    <property type="entry name" value="Class II aaRS and biotin synthetases"/>
    <property type="match status" value="1"/>
</dbReference>
<dbReference type="SUPFAM" id="SSF101353">
    <property type="entry name" value="Putative anticodon-binding domain of alanyl-tRNA synthetase (AlaRS)"/>
    <property type="match status" value="1"/>
</dbReference>
<dbReference type="SUPFAM" id="SSF55186">
    <property type="entry name" value="ThrRS/AlaRS common domain"/>
    <property type="match status" value="1"/>
</dbReference>
<dbReference type="SUPFAM" id="SSF50447">
    <property type="entry name" value="Translation proteins"/>
    <property type="match status" value="1"/>
</dbReference>
<dbReference type="PROSITE" id="PS50860">
    <property type="entry name" value="AA_TRNA_LIGASE_II_ALA"/>
    <property type="match status" value="1"/>
</dbReference>